<protein>
    <recommendedName>
        <fullName>Parvalbumin beta</fullName>
    </recommendedName>
    <alternativeName>
        <fullName>Parvalbumin V</fullName>
    </alternativeName>
</protein>
<accession>P05939</accession>
<reference key="1">
    <citation type="journal article" date="1978" name="Comp. Biochem. Physiol.">
        <title>Phylogenetic relationships between Cyprinidae Parvalbumins-II. The amino acid sequence of the Parvalbumin V of Chub (Leuciscus cephalus L.).</title>
        <authorList>
            <person name="Gerday C."/>
            <person name="Collins S."/>
            <person name="Piront A."/>
        </authorList>
    </citation>
    <scope>PROTEIN SEQUENCE</scope>
    <scope>ACETYLATION AT ALA-1</scope>
</reference>
<dbReference type="SMR" id="P05939"/>
<dbReference type="GO" id="GO:0005737">
    <property type="term" value="C:cytoplasm"/>
    <property type="evidence" value="ECO:0007669"/>
    <property type="project" value="TreeGrafter"/>
</dbReference>
<dbReference type="GO" id="GO:0005509">
    <property type="term" value="F:calcium ion binding"/>
    <property type="evidence" value="ECO:0007669"/>
    <property type="project" value="InterPro"/>
</dbReference>
<dbReference type="CDD" id="cd16255">
    <property type="entry name" value="EFh_parvalbumin_beta"/>
    <property type="match status" value="1"/>
</dbReference>
<dbReference type="FunFam" id="1.10.238.10:FF:000060">
    <property type="entry name" value="Parvalbumin, thymic"/>
    <property type="match status" value="1"/>
</dbReference>
<dbReference type="Gene3D" id="1.10.238.10">
    <property type="entry name" value="EF-hand"/>
    <property type="match status" value="1"/>
</dbReference>
<dbReference type="InterPro" id="IPR011992">
    <property type="entry name" value="EF-hand-dom_pair"/>
</dbReference>
<dbReference type="InterPro" id="IPR018247">
    <property type="entry name" value="EF_Hand_1_Ca_BS"/>
</dbReference>
<dbReference type="InterPro" id="IPR002048">
    <property type="entry name" value="EF_hand_dom"/>
</dbReference>
<dbReference type="InterPro" id="IPR008080">
    <property type="entry name" value="Parvalbumin"/>
</dbReference>
<dbReference type="PANTHER" id="PTHR11653:SF12">
    <property type="entry name" value="PARVALBUMIN"/>
    <property type="match status" value="1"/>
</dbReference>
<dbReference type="PANTHER" id="PTHR11653">
    <property type="entry name" value="PARVALBUMIN ALPHA"/>
    <property type="match status" value="1"/>
</dbReference>
<dbReference type="Pfam" id="PF13499">
    <property type="entry name" value="EF-hand_7"/>
    <property type="match status" value="1"/>
</dbReference>
<dbReference type="PRINTS" id="PR01697">
    <property type="entry name" value="PARVALBUMIN"/>
</dbReference>
<dbReference type="SMART" id="SM00054">
    <property type="entry name" value="EFh"/>
    <property type="match status" value="2"/>
</dbReference>
<dbReference type="SUPFAM" id="SSF47473">
    <property type="entry name" value="EF-hand"/>
    <property type="match status" value="1"/>
</dbReference>
<dbReference type="PROSITE" id="PS00018">
    <property type="entry name" value="EF_HAND_1"/>
    <property type="match status" value="2"/>
</dbReference>
<dbReference type="PROSITE" id="PS50222">
    <property type="entry name" value="EF_HAND_2"/>
    <property type="match status" value="2"/>
</dbReference>
<keyword id="KW-0007">Acetylation</keyword>
<keyword id="KW-0106">Calcium</keyword>
<keyword id="KW-0903">Direct protein sequencing</keyword>
<keyword id="KW-0479">Metal-binding</keyword>
<keyword id="KW-0514">Muscle protein</keyword>
<keyword id="KW-0677">Repeat</keyword>
<proteinExistence type="evidence at protein level"/>
<feature type="chain" id="PRO_0000073612" description="Parvalbumin beta">
    <location>
        <begin position="1"/>
        <end position="106"/>
    </location>
</feature>
<feature type="domain" description="EF-hand 1" evidence="3">
    <location>
        <begin position="36"/>
        <end position="71"/>
    </location>
</feature>
<feature type="domain" description="EF-hand 2" evidence="3">
    <location>
        <begin position="75"/>
        <end position="106"/>
    </location>
</feature>
<feature type="binding site" evidence="3">
    <location>
        <position position="49"/>
    </location>
    <ligand>
        <name>Ca(2+)</name>
        <dbReference type="ChEBI" id="CHEBI:29108"/>
        <label>1</label>
    </ligand>
</feature>
<feature type="binding site" evidence="3">
    <location>
        <position position="51"/>
    </location>
    <ligand>
        <name>Ca(2+)</name>
        <dbReference type="ChEBI" id="CHEBI:29108"/>
        <label>1</label>
    </ligand>
</feature>
<feature type="binding site" evidence="3">
    <location>
        <position position="53"/>
    </location>
    <ligand>
        <name>Ca(2+)</name>
        <dbReference type="ChEBI" id="CHEBI:29108"/>
        <label>1</label>
    </ligand>
</feature>
<feature type="binding site" evidence="2">
    <location>
        <position position="55"/>
    </location>
    <ligand>
        <name>Ca(2+)</name>
        <dbReference type="ChEBI" id="CHEBI:29108"/>
        <label>1</label>
    </ligand>
</feature>
<feature type="binding site" evidence="2">
    <location>
        <position position="57"/>
    </location>
    <ligand>
        <name>Ca(2+)</name>
        <dbReference type="ChEBI" id="CHEBI:29108"/>
        <label>1</label>
    </ligand>
</feature>
<feature type="binding site" evidence="3">
    <location>
        <position position="60"/>
    </location>
    <ligand>
        <name>Ca(2+)</name>
        <dbReference type="ChEBI" id="CHEBI:29108"/>
        <label>1</label>
    </ligand>
</feature>
<feature type="binding site" evidence="3">
    <location>
        <position position="88"/>
    </location>
    <ligand>
        <name>Ca(2+)</name>
        <dbReference type="ChEBI" id="CHEBI:29108"/>
        <label>2</label>
    </ligand>
</feature>
<feature type="binding site" evidence="3">
    <location>
        <position position="90"/>
    </location>
    <ligand>
        <name>Ca(2+)</name>
        <dbReference type="ChEBI" id="CHEBI:29108"/>
        <label>2</label>
    </ligand>
</feature>
<feature type="binding site" evidence="3">
    <location>
        <position position="92"/>
    </location>
    <ligand>
        <name>Ca(2+)</name>
        <dbReference type="ChEBI" id="CHEBI:29108"/>
        <label>2</label>
    </ligand>
</feature>
<feature type="binding site" evidence="3">
    <location>
        <position position="94"/>
    </location>
    <ligand>
        <name>Ca(2+)</name>
        <dbReference type="ChEBI" id="CHEBI:29108"/>
        <label>2</label>
    </ligand>
</feature>
<feature type="binding site" evidence="3">
    <location>
        <position position="99"/>
    </location>
    <ligand>
        <name>Ca(2+)</name>
        <dbReference type="ChEBI" id="CHEBI:29108"/>
        <label>2</label>
    </ligand>
</feature>
<feature type="modified residue" description="N-acetylalanine" evidence="4">
    <location>
        <position position="1"/>
    </location>
</feature>
<sequence length="106" mass="11263">AFGLKEADITAALEACKAADSFNHKAFFAKVGMSAKSAGDVKKAFEIIDEDKSGFIEEEELKLFLQNFKAGARALTDAETKIFLKAGDADGDGKIGIDEFAALVKA</sequence>
<evidence type="ECO:0000250" key="1"/>
<evidence type="ECO:0000250" key="2">
    <source>
        <dbReference type="UniProtKB" id="P02621"/>
    </source>
</evidence>
<evidence type="ECO:0000255" key="3">
    <source>
        <dbReference type="PROSITE-ProRule" id="PRU00448"/>
    </source>
</evidence>
<evidence type="ECO:0000269" key="4">
    <source ref="1"/>
</evidence>
<evidence type="ECO:0000305" key="5"/>
<organism>
    <name type="scientific">Squalius cephalus</name>
    <name type="common">Chub</name>
    <name type="synonym">Leuciscus cephalus</name>
    <dbReference type="NCBI Taxonomy" id="8284"/>
    <lineage>
        <taxon>Eukaryota</taxon>
        <taxon>Metazoa</taxon>
        <taxon>Chordata</taxon>
        <taxon>Craniata</taxon>
        <taxon>Vertebrata</taxon>
        <taxon>Euteleostomi</taxon>
        <taxon>Actinopterygii</taxon>
        <taxon>Neopterygii</taxon>
        <taxon>Teleostei</taxon>
        <taxon>Ostariophysi</taxon>
        <taxon>Cypriniformes</taxon>
        <taxon>Leuciscidae</taxon>
        <taxon>Leuciscinae</taxon>
        <taxon>Squalius</taxon>
    </lineage>
</organism>
<comment type="function">
    <text evidence="1">In muscle, parvalbumin is thought to be involved in relaxation after contraction. It binds two calcium ions (By similarity).</text>
</comment>
<comment type="similarity">
    <text evidence="5">Belongs to the parvalbumin family.</text>
</comment>
<name>PRVB_SQUCE</name>